<name>CD27_HUMAN</name>
<feature type="signal peptide" evidence="7">
    <location>
        <begin position="1"/>
        <end position="19"/>
    </location>
</feature>
<feature type="chain" id="PRO_0000034571" description="CD27 antigen">
    <location>
        <begin position="20"/>
        <end position="260"/>
    </location>
</feature>
<feature type="topological domain" description="Extracellular" evidence="2">
    <location>
        <begin position="20"/>
        <end position="191"/>
    </location>
</feature>
<feature type="transmembrane region" description="Helical" evidence="2">
    <location>
        <begin position="192"/>
        <end position="212"/>
    </location>
</feature>
<feature type="topological domain" description="Cytoplasmic" evidence="2">
    <location>
        <begin position="213"/>
        <end position="260"/>
    </location>
</feature>
<feature type="repeat" description="TNFR-Cys 1">
    <location>
        <begin position="26"/>
        <end position="63"/>
    </location>
</feature>
<feature type="repeat" description="TNFR-Cys 2">
    <location>
        <begin position="64"/>
        <end position="104"/>
    </location>
</feature>
<feature type="repeat" description="TNFR-Cys 3">
    <location>
        <begin position="105"/>
        <end position="141"/>
    </location>
</feature>
<feature type="region of interest" description="Disordered" evidence="4">
    <location>
        <begin position="219"/>
        <end position="260"/>
    </location>
</feature>
<feature type="compositionally biased region" description="Basic and acidic residues" evidence="4">
    <location>
        <begin position="249"/>
        <end position="260"/>
    </location>
</feature>
<feature type="modified residue" description="Phosphoserine" evidence="2">
    <location>
        <position position="219"/>
    </location>
</feature>
<feature type="glycosylation site" description="N-linked (GlcNAc...) asparagine" evidence="14 22">
    <location>
        <position position="95"/>
    </location>
</feature>
<feature type="glycosylation site" description="O-linked (GalNAc...) serine" evidence="10">
    <location>
        <position position="127"/>
    </location>
</feature>
<feature type="disulfide bond" evidence="3 14 22">
    <location>
        <begin position="27"/>
        <end position="39"/>
    </location>
</feature>
<feature type="disulfide bond" evidence="3 14 22">
    <location>
        <begin position="40"/>
        <end position="53"/>
    </location>
</feature>
<feature type="disulfide bond" evidence="3 14 22">
    <location>
        <begin position="43"/>
        <end position="62"/>
    </location>
</feature>
<feature type="disulfide bond" evidence="3 14 22">
    <location>
        <begin position="65"/>
        <end position="81"/>
    </location>
</feature>
<feature type="disulfide bond" evidence="3 14 22">
    <location>
        <begin position="84"/>
        <end position="96"/>
    </location>
</feature>
<feature type="disulfide bond" evidence="3 14 22">
    <location>
        <begin position="87"/>
        <end position="104"/>
    </location>
</feature>
<feature type="disulfide bond" evidence="14 22">
    <location>
        <begin position="106"/>
        <end position="120"/>
    </location>
</feature>
<feature type="disulfide bond" evidence="14 22">
    <location>
        <begin position="112"/>
        <end position="117"/>
    </location>
</feature>
<feature type="sequence variant" id="VAR_069793" description="In LPFS2; dbSNP:rs397514667." evidence="12">
    <original>C</original>
    <variation>Y</variation>
    <location>
        <position position="53"/>
    </location>
</feature>
<feature type="sequence variant" id="VAR_016148" description="In dbSNP:rs25680." evidence="5 6 18">
    <original>A</original>
    <variation>T</variation>
    <location>
        <position position="59"/>
    </location>
</feature>
<feature type="sequence variant" id="VAR_052348" description="In dbSNP:rs2532502." evidence="5 6 8 9 18">
    <original>H</original>
    <variation>R</variation>
    <location>
        <position position="233"/>
    </location>
</feature>
<feature type="mutagenesis site" description="Decreased CD70 binding." evidence="14">
    <original>R</original>
    <variation>A</variation>
    <location>
        <position position="30"/>
    </location>
</feature>
<feature type="mutagenesis site" description="Decreased CD70 binding." evidence="14">
    <original>D</original>
    <variation>A</variation>
    <location>
        <position position="74"/>
    </location>
</feature>
<feature type="mutagenesis site" description="Loss of CD70 binding." evidence="14">
    <original>E</original>
    <variation>A</variation>
    <variation>R</variation>
    <location>
        <position position="82"/>
    </location>
</feature>
<feature type="mutagenesis site" description="Decreased CD70 binding." evidence="14">
    <original>S</original>
    <variation>A</variation>
    <location>
        <position position="83"/>
    </location>
</feature>
<feature type="mutagenesis site" description="Decreased CD70 binding." evidence="14">
    <original>N</original>
    <variation>A</variation>
    <location>
        <position position="88"/>
    </location>
</feature>
<feature type="mutagenesis site" description="No effect on CD70 binding." evidence="14">
    <original>N</original>
    <variation>A</variation>
    <location>
        <position position="95"/>
    </location>
</feature>
<feature type="mutagenesis site" description="Decreased CD70 binding." evidence="14">
    <original>R</original>
    <variation>A</variation>
    <location>
        <position position="113"/>
    </location>
</feature>
<feature type="mutagenesis site" description="Decreased CD70 binding." evidence="14">
    <original>D</original>
    <variation>E</variation>
    <variation>R</variation>
    <location>
        <position position="114"/>
    </location>
</feature>
<feature type="mutagenesis site" description="Decreased CD70 binding." evidence="14">
    <original>T</original>
    <variation>E</variation>
    <variation>R</variation>
    <location>
        <position position="118"/>
    </location>
</feature>
<feature type="mutagenesis site" description="Decreased CD70 binding." evidence="14">
    <original>D</original>
    <variation>A</variation>
    <location>
        <position position="121"/>
    </location>
</feature>
<feature type="strand" evidence="23">
    <location>
        <begin position="31"/>
        <end position="34"/>
    </location>
</feature>
<feature type="turn" evidence="23">
    <location>
        <begin position="35"/>
        <end position="37"/>
    </location>
</feature>
<feature type="strand" evidence="23">
    <location>
        <begin position="38"/>
        <end position="41"/>
    </location>
</feature>
<feature type="strand" evidence="23">
    <location>
        <begin position="47"/>
        <end position="51"/>
    </location>
</feature>
<feature type="strand" evidence="23">
    <location>
        <begin position="61"/>
        <end position="64"/>
    </location>
</feature>
<feature type="turn" evidence="23">
    <location>
        <begin position="67"/>
        <end position="69"/>
    </location>
</feature>
<feature type="strand" evidence="23">
    <location>
        <begin position="74"/>
        <end position="76"/>
    </location>
</feature>
<feature type="strand" evidence="23">
    <location>
        <begin position="88"/>
        <end position="94"/>
    </location>
</feature>
<feature type="strand" evidence="24">
    <location>
        <begin position="98"/>
        <end position="100"/>
    </location>
</feature>
<feature type="strand" evidence="23">
    <location>
        <begin position="103"/>
        <end position="105"/>
    </location>
</feature>
<feature type="strand" evidence="23">
    <location>
        <begin position="112"/>
        <end position="114"/>
    </location>
</feature>
<feature type="strand" evidence="23">
    <location>
        <begin position="117"/>
        <end position="120"/>
    </location>
</feature>
<dbReference type="EMBL" id="M63928">
    <property type="protein sequence ID" value="AAA58411.1"/>
    <property type="molecule type" value="mRNA"/>
</dbReference>
<dbReference type="EMBL" id="AK315732">
    <property type="protein sequence ID" value="BAG38087.1"/>
    <property type="molecule type" value="mRNA"/>
</dbReference>
<dbReference type="EMBL" id="AY504961">
    <property type="protein sequence ID" value="AAR84239.1"/>
    <property type="molecule type" value="Genomic_DNA"/>
</dbReference>
<dbReference type="EMBL" id="AC005840">
    <property type="status" value="NOT_ANNOTATED_CDS"/>
    <property type="molecule type" value="Genomic_DNA"/>
</dbReference>
<dbReference type="EMBL" id="BC012160">
    <property type="protein sequence ID" value="AAH12160.1"/>
    <property type="molecule type" value="mRNA"/>
</dbReference>
<dbReference type="CCDS" id="CCDS8545.1"/>
<dbReference type="PIR" id="A46517">
    <property type="entry name" value="A46517"/>
</dbReference>
<dbReference type="RefSeq" id="NP_001233.2">
    <property type="nucleotide sequence ID" value="NM_001242.5"/>
</dbReference>
<dbReference type="PDB" id="5TL5">
    <property type="method" value="X-ray"/>
    <property type="resolution" value="1.80 A"/>
    <property type="chains" value="A=21-121"/>
</dbReference>
<dbReference type="PDB" id="5TLJ">
    <property type="method" value="X-ray"/>
    <property type="resolution" value="3.50 A"/>
    <property type="chains" value="X=21-121"/>
</dbReference>
<dbReference type="PDB" id="5TLK">
    <property type="method" value="X-ray"/>
    <property type="resolution" value="2.70 A"/>
    <property type="chains" value="X/Y=21-121"/>
</dbReference>
<dbReference type="PDB" id="7KX0">
    <property type="method" value="X-ray"/>
    <property type="resolution" value="2.69 A"/>
    <property type="chains" value="D/E/F=23-127"/>
</dbReference>
<dbReference type="PDB" id="8DS5">
    <property type="method" value="X-ray"/>
    <property type="resolution" value="1.93 A"/>
    <property type="chains" value="A=21-177"/>
</dbReference>
<dbReference type="PDBsum" id="5TL5"/>
<dbReference type="PDBsum" id="5TLJ"/>
<dbReference type="PDBsum" id="5TLK"/>
<dbReference type="PDBsum" id="7KX0"/>
<dbReference type="PDBsum" id="8DS5"/>
<dbReference type="SMR" id="P26842"/>
<dbReference type="BioGRID" id="107377">
    <property type="interactions" value="77"/>
</dbReference>
<dbReference type="ELM" id="P26842"/>
<dbReference type="FunCoup" id="P26842">
    <property type="interactions" value="363"/>
</dbReference>
<dbReference type="IntAct" id="P26842">
    <property type="interactions" value="65"/>
</dbReference>
<dbReference type="STRING" id="9606.ENSP00000266557"/>
<dbReference type="ChEMBL" id="CHEMBL3713333"/>
<dbReference type="GlyConnect" id="800">
    <property type="glycosylation" value="3 N-Linked glycans (1 site), 1 O-Linked glycan (1 site)"/>
</dbReference>
<dbReference type="GlyCosmos" id="P26842">
    <property type="glycosylation" value="4 sites, 5 glycans"/>
</dbReference>
<dbReference type="GlyGen" id="P26842">
    <property type="glycosylation" value="6 sites, 3 N-linked glycans (1 site), 2 O-linked glycans (3 sites)"/>
</dbReference>
<dbReference type="iPTMnet" id="P26842"/>
<dbReference type="PhosphoSitePlus" id="P26842"/>
<dbReference type="SwissPalm" id="P26842"/>
<dbReference type="BioMuta" id="CD27"/>
<dbReference type="DMDM" id="269849546"/>
<dbReference type="MassIVE" id="P26842"/>
<dbReference type="PaxDb" id="9606-ENSP00000266557"/>
<dbReference type="PeptideAtlas" id="P26842"/>
<dbReference type="ProteomicsDB" id="54366"/>
<dbReference type="ABCD" id="P26842">
    <property type="antibodies" value="16 sequenced antibodies"/>
</dbReference>
<dbReference type="Antibodypedia" id="3716">
    <property type="antibodies" value="2340 antibodies from 52 providers"/>
</dbReference>
<dbReference type="CPTC" id="P26842">
    <property type="antibodies" value="3 antibodies"/>
</dbReference>
<dbReference type="DNASU" id="939"/>
<dbReference type="Ensembl" id="ENST00000266557.4">
    <property type="protein sequence ID" value="ENSP00000266557.3"/>
    <property type="gene ID" value="ENSG00000139193.4"/>
</dbReference>
<dbReference type="GeneID" id="939"/>
<dbReference type="KEGG" id="hsa:939"/>
<dbReference type="MANE-Select" id="ENST00000266557.4">
    <property type="protein sequence ID" value="ENSP00000266557.3"/>
    <property type="RefSeq nucleotide sequence ID" value="NM_001242.5"/>
    <property type="RefSeq protein sequence ID" value="NP_001233.2"/>
</dbReference>
<dbReference type="UCSC" id="uc001qod.4">
    <property type="organism name" value="human"/>
</dbReference>
<dbReference type="AGR" id="HGNC:11922"/>
<dbReference type="CTD" id="939"/>
<dbReference type="DisGeNET" id="939"/>
<dbReference type="GeneCards" id="CD27"/>
<dbReference type="HGNC" id="HGNC:11922">
    <property type="gene designation" value="CD27"/>
</dbReference>
<dbReference type="HPA" id="ENSG00000139193">
    <property type="expression patterns" value="Tissue enriched (lymphoid)"/>
</dbReference>
<dbReference type="MalaCards" id="CD27"/>
<dbReference type="MIM" id="186711">
    <property type="type" value="gene"/>
</dbReference>
<dbReference type="MIM" id="615122">
    <property type="type" value="phenotype"/>
</dbReference>
<dbReference type="neXtProt" id="NX_P26842"/>
<dbReference type="OpenTargets" id="ENSG00000139193"/>
<dbReference type="Orphanet" id="238505">
    <property type="disease" value="Combined immunodeficiency due to CD27 deficiency"/>
</dbReference>
<dbReference type="PharmGKB" id="PA162382107"/>
<dbReference type="VEuPathDB" id="HostDB:ENSG00000139193"/>
<dbReference type="eggNOG" id="ENOG502SBE3">
    <property type="taxonomic scope" value="Eukaryota"/>
</dbReference>
<dbReference type="GeneTree" id="ENSGT00510000049297"/>
<dbReference type="HOGENOM" id="CLU_067121_0_0_1"/>
<dbReference type="InParanoid" id="P26842"/>
<dbReference type="OMA" id="LSTHWSP"/>
<dbReference type="OrthoDB" id="9374769at2759"/>
<dbReference type="PAN-GO" id="P26842">
    <property type="GO annotations" value="2 GO annotations based on evolutionary models"/>
</dbReference>
<dbReference type="PhylomeDB" id="P26842"/>
<dbReference type="TreeFam" id="TF336960"/>
<dbReference type="PathwayCommons" id="P26842"/>
<dbReference type="Reactome" id="R-HSA-5669034">
    <property type="pathway name" value="TNFs bind their physiological receptors"/>
</dbReference>
<dbReference type="SignaLink" id="P26842"/>
<dbReference type="SIGNOR" id="P26842"/>
<dbReference type="BioGRID-ORCS" id="939">
    <property type="hits" value="20 hits in 1149 CRISPR screens"/>
</dbReference>
<dbReference type="GeneWiki" id="CD27"/>
<dbReference type="GenomeRNAi" id="939"/>
<dbReference type="Pharos" id="P26842">
    <property type="development level" value="Tbio"/>
</dbReference>
<dbReference type="PRO" id="PR:P26842"/>
<dbReference type="Proteomes" id="UP000005640">
    <property type="component" value="Chromosome 12"/>
</dbReference>
<dbReference type="RNAct" id="P26842">
    <property type="molecule type" value="protein"/>
</dbReference>
<dbReference type="Bgee" id="ENSG00000139193">
    <property type="expression patterns" value="Expressed in lymph node and 97 other cell types or tissues"/>
</dbReference>
<dbReference type="GO" id="GO:0009897">
    <property type="term" value="C:external side of plasma membrane"/>
    <property type="evidence" value="ECO:0000318"/>
    <property type="project" value="GO_Central"/>
</dbReference>
<dbReference type="GO" id="GO:0005576">
    <property type="term" value="C:extracellular region"/>
    <property type="evidence" value="ECO:0000303"/>
    <property type="project" value="UniProtKB"/>
</dbReference>
<dbReference type="GO" id="GO:0005886">
    <property type="term" value="C:plasma membrane"/>
    <property type="evidence" value="ECO:0000314"/>
    <property type="project" value="UniProtKB"/>
</dbReference>
<dbReference type="GO" id="GO:0043027">
    <property type="term" value="F:cysteine-type endopeptidase inhibitor activity involved in apoptotic process"/>
    <property type="evidence" value="ECO:0000314"/>
    <property type="project" value="UniProtKB"/>
</dbReference>
<dbReference type="GO" id="GO:0004888">
    <property type="term" value="F:transmembrane signaling receptor activity"/>
    <property type="evidence" value="ECO:0000314"/>
    <property type="project" value="UniProtKB"/>
</dbReference>
<dbReference type="GO" id="GO:0090717">
    <property type="term" value="P:adaptive immune memory response involving T cells and B cells"/>
    <property type="evidence" value="ECO:0000315"/>
    <property type="project" value="UniProtKB"/>
</dbReference>
<dbReference type="GO" id="GO:0160162">
    <property type="term" value="P:CD27 signaling pathway"/>
    <property type="evidence" value="ECO:0000314"/>
    <property type="project" value="UniProtKB"/>
</dbReference>
<dbReference type="GO" id="GO:0007166">
    <property type="term" value="P:cell surface receptor signaling pathway"/>
    <property type="evidence" value="ECO:0000303"/>
    <property type="project" value="UniProtKB"/>
</dbReference>
<dbReference type="GO" id="GO:0097191">
    <property type="term" value="P:extrinsic apoptotic signaling pathway"/>
    <property type="evidence" value="ECO:0000314"/>
    <property type="project" value="BHF-UCL"/>
</dbReference>
<dbReference type="GO" id="GO:0016064">
    <property type="term" value="P:immunoglobulin mediated immune response"/>
    <property type="evidence" value="ECO:0000303"/>
    <property type="project" value="UniProtKB"/>
</dbReference>
<dbReference type="GO" id="GO:0043066">
    <property type="term" value="P:negative regulation of apoptotic process"/>
    <property type="evidence" value="ECO:0000314"/>
    <property type="project" value="UniProtKB"/>
</dbReference>
<dbReference type="GO" id="GO:0070233">
    <property type="term" value="P:negative regulation of T cell apoptotic process"/>
    <property type="evidence" value="ECO:0007669"/>
    <property type="project" value="Ensembl"/>
</dbReference>
<dbReference type="GO" id="GO:0045579">
    <property type="term" value="P:positive regulation of B cell differentiation"/>
    <property type="evidence" value="ECO:0000303"/>
    <property type="project" value="UniProtKB"/>
</dbReference>
<dbReference type="GO" id="GO:0046330">
    <property type="term" value="P:positive regulation of JNK cascade"/>
    <property type="evidence" value="ECO:0000250"/>
    <property type="project" value="UniProtKB"/>
</dbReference>
<dbReference type="GO" id="GO:1901224">
    <property type="term" value="P:positive regulation of non-canonical NF-kappaB signal transduction"/>
    <property type="evidence" value="ECO:0000303"/>
    <property type="project" value="UniProtKB"/>
</dbReference>
<dbReference type="GO" id="GO:0045582">
    <property type="term" value="P:positive regulation of T cell differentiation"/>
    <property type="evidence" value="ECO:0007669"/>
    <property type="project" value="InterPro"/>
</dbReference>
<dbReference type="GO" id="GO:0045471">
    <property type="term" value="P:response to ethanol"/>
    <property type="evidence" value="ECO:0007669"/>
    <property type="project" value="Ensembl"/>
</dbReference>
<dbReference type="GO" id="GO:0042110">
    <property type="term" value="P:T cell activation"/>
    <property type="evidence" value="ECO:0000314"/>
    <property type="project" value="UniProt"/>
</dbReference>
<dbReference type="CDD" id="cd13408">
    <property type="entry name" value="TNFRSF7"/>
    <property type="match status" value="1"/>
</dbReference>
<dbReference type="FunFam" id="2.10.50.10:FF:000033">
    <property type="entry name" value="CD27 molecule"/>
    <property type="match status" value="1"/>
</dbReference>
<dbReference type="Gene3D" id="2.10.50.10">
    <property type="entry name" value="Tumor Necrosis Factor Receptor, subunit A, domain 2"/>
    <property type="match status" value="1"/>
</dbReference>
<dbReference type="InterPro" id="IPR053126">
    <property type="entry name" value="CD27_receptor"/>
</dbReference>
<dbReference type="InterPro" id="IPR001368">
    <property type="entry name" value="TNFR/NGFR_Cys_rich_reg"/>
</dbReference>
<dbReference type="InterPro" id="IPR022328">
    <property type="entry name" value="TNFR_7"/>
</dbReference>
<dbReference type="InterPro" id="IPR034000">
    <property type="entry name" value="TNFRSF7_N"/>
</dbReference>
<dbReference type="PANTHER" id="PTHR47496">
    <property type="entry name" value="CD27"/>
    <property type="match status" value="1"/>
</dbReference>
<dbReference type="PANTHER" id="PTHR47496:SF1">
    <property type="entry name" value="CD27 ANTIGEN"/>
    <property type="match status" value="1"/>
</dbReference>
<dbReference type="Pfam" id="PF00020">
    <property type="entry name" value="TNFR_c6"/>
    <property type="match status" value="1"/>
</dbReference>
<dbReference type="PRINTS" id="PR01960">
    <property type="entry name" value="TNFACTORR7"/>
</dbReference>
<dbReference type="SMART" id="SM00208">
    <property type="entry name" value="TNFR"/>
    <property type="match status" value="2"/>
</dbReference>
<dbReference type="SUPFAM" id="SSF57586">
    <property type="entry name" value="TNF receptor-like"/>
    <property type="match status" value="2"/>
</dbReference>
<dbReference type="PROSITE" id="PS00652">
    <property type="entry name" value="TNFR_NGFR_1"/>
    <property type="match status" value="1"/>
</dbReference>
<dbReference type="PROSITE" id="PS50050">
    <property type="entry name" value="TNFR_NGFR_2"/>
    <property type="match status" value="1"/>
</dbReference>
<comment type="function">
    <text evidence="1 13 15">Costimulatory immune-checkpoint receptor expressed at the surface of T-cells, NK-cells and B-cells which binds to and is activated by its ligand CD70/CD27L expressed by B-cells (PubMed:28011863). The CD70-CD27 signaling pathway mediates antigen-specific T-cell activation and expansion which in turn provides immune surveillance of B-cells (PubMed:28011863). Mechanistically, CD70 ligation activates the TRAF2-PTPN6 axis that subsequently inhibits LCK phosphorylation to promote phenotypic and transcriptional adaptations of T-cell memory (PubMed:38354704). In addition, activation by CD70 on early progenitor cells provides a negative feedback signal to leukocyte differentiation during immune activation and thus modulates hematopoiesis (By similarity). Negatively regulates the function of Th2 lymphocytes in the adipose tissue (By similarity).</text>
</comment>
<comment type="subunit">
    <text evidence="9 14 15 16 17">Homodimer (PubMed:1655907, PubMed:34419446). Interacts with SIVA1; may play a role in apoptosis through association with SIVA1 (PubMed:9177220). Interacts with TRAF2 (PubMed:38354704, PubMed:9692890). Interacts ith PTPN6 (PubMed:38354704).</text>
</comment>
<comment type="interaction">
    <interactant intactId="EBI-520729">
        <id>P26842</id>
    </interactant>
    <interactant intactId="EBI-77797">
        <id>P35609</id>
        <label>ACTN2</label>
    </interactant>
    <organismsDiffer>false</organismsDiffer>
    <experiments>3</experiments>
</comment>
<comment type="interaction">
    <interactant intactId="EBI-520729">
        <id>P26842</id>
    </interactant>
    <interactant intactId="EBI-372594">
        <id>Q99828</id>
        <label>CIB1</label>
    </interactant>
    <organismsDiffer>false</organismsDiffer>
    <experiments>7</experiments>
</comment>
<comment type="interaction">
    <interactant intactId="EBI-520729">
        <id>P26842</id>
    </interactant>
    <interactant intactId="EBI-520756">
        <id>O15304</id>
        <label>SIVA1</label>
    </interactant>
    <organismsDiffer>false</organismsDiffer>
    <experiments>3</experiments>
</comment>
<comment type="interaction">
    <interactant intactId="EBI-520729">
        <id>P26842</id>
    </interactant>
    <interactant intactId="EBI-5235340">
        <id>Q7Z699</id>
        <label>SPRED1</label>
    </interactant>
    <organismsDiffer>false</organismsDiffer>
    <experiments>3</experiments>
</comment>
<comment type="interaction">
    <interactant intactId="EBI-520729">
        <id>P26842</id>
    </interactant>
    <interactant intactId="EBI-355744">
        <id>Q12933</id>
        <label>TRAF2</label>
    </interactant>
    <organismsDiffer>false</organismsDiffer>
    <experiments>3</experiments>
</comment>
<comment type="interaction">
    <interactant intactId="EBI-520729">
        <id>P26842</id>
    </interactant>
    <interactant intactId="EBI-25475868">
        <id>PRO_0000449624</id>
        <label>rep</label>
        <dbReference type="UniProtKB" id="P0DTD1"/>
    </interactant>
    <organismsDiffer>true</organismsDiffer>
    <experiments>3</experiments>
</comment>
<comment type="subcellular location">
    <subcellularLocation>
        <location evidence="13">Cell membrane</location>
        <topology evidence="2">Single-pass type I membrane protein</topology>
    </subcellularLocation>
</comment>
<comment type="tissue specificity">
    <text evidence="9">Found in most T-lymphocytes.</text>
</comment>
<comment type="PTM">
    <text evidence="19">Phosphorylated.</text>
</comment>
<comment type="PTM">
    <text evidence="14">N-glycosylated.</text>
</comment>
<comment type="PTM">
    <text evidence="10">O-glycosylated with core 1 or possibly core 8 glycans.</text>
</comment>
<comment type="disease" evidence="11 12">
    <disease id="DI-03702">
        <name>Lymphoproliferative syndrome 2</name>
        <acronym>LPFS2</acronym>
        <description>An autosomal recessive immunodeficiency disorder associated with persistent symptomatic EBV viremia, hypogammaglobulinemia, and impaired T-cell-dependent B-cell responses and T-cell dysfunction. The phenotype is highly variable, ranging from asymptomatic borderline-low hypogammaglobulinemia, to a full-blown symptomatic systemic inflammatory response with life-threatening EBV-related complications, including hemophagocytic lymphohistiocytosis, a lymphoproliferative disorder, and malignant lymphoma requiring stem cell transplantation.</description>
        <dbReference type="MIM" id="615122"/>
    </disease>
    <text>The disease is caused by variants affecting the gene represented in this entry.</text>
</comment>
<evidence type="ECO:0000250" key="1">
    <source>
        <dbReference type="UniProtKB" id="P41272"/>
    </source>
</evidence>
<evidence type="ECO:0000255" key="2"/>
<evidence type="ECO:0000255" key="3">
    <source>
        <dbReference type="PROSITE-ProRule" id="PRU00206"/>
    </source>
</evidence>
<evidence type="ECO:0000256" key="4">
    <source>
        <dbReference type="SAM" id="MobiDB-lite"/>
    </source>
</evidence>
<evidence type="ECO:0000269" key="5">
    <source>
    </source>
</evidence>
<evidence type="ECO:0000269" key="6">
    <source>
    </source>
</evidence>
<evidence type="ECO:0000269" key="7">
    <source>
    </source>
</evidence>
<evidence type="ECO:0000269" key="8">
    <source>
    </source>
</evidence>
<evidence type="ECO:0000269" key="9">
    <source>
    </source>
</evidence>
<evidence type="ECO:0000269" key="10">
    <source>
    </source>
</evidence>
<evidence type="ECO:0000269" key="11">
    <source>
    </source>
</evidence>
<evidence type="ECO:0000269" key="12">
    <source>
    </source>
</evidence>
<evidence type="ECO:0000269" key="13">
    <source>
    </source>
</evidence>
<evidence type="ECO:0000269" key="14">
    <source>
    </source>
</evidence>
<evidence type="ECO:0000269" key="15">
    <source>
    </source>
</evidence>
<evidence type="ECO:0000269" key="16">
    <source>
    </source>
</evidence>
<evidence type="ECO:0000269" key="17">
    <source>
    </source>
</evidence>
<evidence type="ECO:0000269" key="18">
    <source ref="4"/>
</evidence>
<evidence type="ECO:0000303" key="19">
    <source>
    </source>
</evidence>
<evidence type="ECO:0000305" key="20">
    <source>
    </source>
</evidence>
<evidence type="ECO:0000312" key="21">
    <source>
        <dbReference type="HGNC" id="HGNC:11922"/>
    </source>
</evidence>
<evidence type="ECO:0007744" key="22">
    <source>
        <dbReference type="PDB" id="7KX0"/>
    </source>
</evidence>
<evidence type="ECO:0007829" key="23">
    <source>
        <dbReference type="PDB" id="5TL5"/>
    </source>
</evidence>
<evidence type="ECO:0007829" key="24">
    <source>
        <dbReference type="PDB" id="7KX0"/>
    </source>
</evidence>
<keyword id="KW-0002">3D-structure</keyword>
<keyword id="KW-0053">Apoptosis</keyword>
<keyword id="KW-1003">Cell membrane</keyword>
<keyword id="KW-0903">Direct protein sequencing</keyword>
<keyword id="KW-0225">Disease variant</keyword>
<keyword id="KW-1015">Disulfide bond</keyword>
<keyword id="KW-0325">Glycoprotein</keyword>
<keyword id="KW-0472">Membrane</keyword>
<keyword id="KW-0597">Phosphoprotein</keyword>
<keyword id="KW-1267">Proteomics identification</keyword>
<keyword id="KW-0675">Receptor</keyword>
<keyword id="KW-1185">Reference proteome</keyword>
<keyword id="KW-0677">Repeat</keyword>
<keyword id="KW-0732">Signal</keyword>
<keyword id="KW-0812">Transmembrane</keyword>
<keyword id="KW-1133">Transmembrane helix</keyword>
<protein>
    <recommendedName>
        <fullName evidence="20">CD27 antigen</fullName>
    </recommendedName>
    <alternativeName>
        <fullName>CD27L receptor</fullName>
    </alternativeName>
    <alternativeName>
        <fullName>T-cell activation antigen CD27</fullName>
    </alternativeName>
    <alternativeName>
        <fullName>T14</fullName>
    </alternativeName>
    <alternativeName>
        <fullName evidence="21">Tumor necrosis factor receptor superfamily member 7</fullName>
    </alternativeName>
    <cdAntigenName>CD27</cdAntigenName>
</protein>
<sequence length="260" mass="29137">MARPHPWWLCVLGTLVGLSATPAPKSCPERHYWAQGKLCCQMCEPGTFLVKDCDQHRKAAQCDPCIPGVSFSPDHHTRPHCESCRHCNSGLLVRNCTITANAECACRNGWQCRDKECTECDPLPNPSLTARSSQALSPHPQPTHLPYVSEMLEARTAGHMQTLADFRQLPARTLSTHWPPQRSLCSSDFIRILVIFSGMFLVFTLAGALFLHQRRKYRSNKGESPVEPAEPCHYSCPREEEGSTIPIQEDYRKPEPACSP</sequence>
<organism>
    <name type="scientific">Homo sapiens</name>
    <name type="common">Human</name>
    <dbReference type="NCBI Taxonomy" id="9606"/>
    <lineage>
        <taxon>Eukaryota</taxon>
        <taxon>Metazoa</taxon>
        <taxon>Chordata</taxon>
        <taxon>Craniata</taxon>
        <taxon>Vertebrata</taxon>
        <taxon>Euteleostomi</taxon>
        <taxon>Mammalia</taxon>
        <taxon>Eutheria</taxon>
        <taxon>Euarchontoglires</taxon>
        <taxon>Primates</taxon>
        <taxon>Haplorrhini</taxon>
        <taxon>Catarrhini</taxon>
        <taxon>Hominidae</taxon>
        <taxon>Homo</taxon>
    </lineage>
</organism>
<accession>P26842</accession>
<accession>B2RDZ0</accession>
<gene>
    <name evidence="21" type="primary">CD27</name>
    <name evidence="21" type="synonym">TNFRSF7</name>
</gene>
<reference key="1">
    <citation type="journal article" date="1991" name="J. Immunol.">
        <title>The T cell activation antigen CD27 is a member of the nerve growth factor/tumor necrosis factor receptor gene family.</title>
        <authorList>
            <person name="Camerini D."/>
            <person name="Walz G."/>
            <person name="Loenen W.A.M."/>
            <person name="Borst J."/>
            <person name="Seed B."/>
        </authorList>
    </citation>
    <scope>NUCLEOTIDE SEQUENCE [MRNA]</scope>
    <scope>SUBUNIT</scope>
    <scope>PHOSPHORYLATION</scope>
    <scope>TISSUE SPECIFICITY</scope>
    <scope>VARIANT ARG-233</scope>
    <source>
        <tissue>Monocyte</tissue>
    </source>
</reference>
<reference key="2">
    <citation type="journal article" date="1992" name="J. Immunol.">
        <title>Genomic organization and chromosomal localization of the human CD27 gene.</title>
        <authorList>
            <person name="Loenen W.A."/>
            <person name="Gravestein L.A."/>
            <person name="Beumer S."/>
            <person name="Melief C.J."/>
            <person name="Hagemeijer A."/>
            <person name="Borst J."/>
        </authorList>
    </citation>
    <scope>NUCLEOTIDE SEQUENCE [GENOMIC DNA]</scope>
    <scope>VARIANTS THR-59 AND ARG-233</scope>
</reference>
<reference key="3">
    <citation type="journal article" date="2004" name="Nat. Genet.">
        <title>Complete sequencing and characterization of 21,243 full-length human cDNAs.</title>
        <authorList>
            <person name="Ota T."/>
            <person name="Suzuki Y."/>
            <person name="Nishikawa T."/>
            <person name="Otsuki T."/>
            <person name="Sugiyama T."/>
            <person name="Irie R."/>
            <person name="Wakamatsu A."/>
            <person name="Hayashi K."/>
            <person name="Sato H."/>
            <person name="Nagai K."/>
            <person name="Kimura K."/>
            <person name="Makita H."/>
            <person name="Sekine M."/>
            <person name="Obayashi M."/>
            <person name="Nishi T."/>
            <person name="Shibahara T."/>
            <person name="Tanaka T."/>
            <person name="Ishii S."/>
            <person name="Yamamoto J."/>
            <person name="Saito K."/>
            <person name="Kawai Y."/>
            <person name="Isono Y."/>
            <person name="Nakamura Y."/>
            <person name="Nagahari K."/>
            <person name="Murakami K."/>
            <person name="Yasuda T."/>
            <person name="Iwayanagi T."/>
            <person name="Wagatsuma M."/>
            <person name="Shiratori A."/>
            <person name="Sudo H."/>
            <person name="Hosoiri T."/>
            <person name="Kaku Y."/>
            <person name="Kodaira H."/>
            <person name="Kondo H."/>
            <person name="Sugawara M."/>
            <person name="Takahashi M."/>
            <person name="Kanda K."/>
            <person name="Yokoi T."/>
            <person name="Furuya T."/>
            <person name="Kikkawa E."/>
            <person name="Omura Y."/>
            <person name="Abe K."/>
            <person name="Kamihara K."/>
            <person name="Katsuta N."/>
            <person name="Sato K."/>
            <person name="Tanikawa M."/>
            <person name="Yamazaki M."/>
            <person name="Ninomiya K."/>
            <person name="Ishibashi T."/>
            <person name="Yamashita H."/>
            <person name="Murakawa K."/>
            <person name="Fujimori K."/>
            <person name="Tanai H."/>
            <person name="Kimata M."/>
            <person name="Watanabe M."/>
            <person name="Hiraoka S."/>
            <person name="Chiba Y."/>
            <person name="Ishida S."/>
            <person name="Ono Y."/>
            <person name="Takiguchi S."/>
            <person name="Watanabe S."/>
            <person name="Yosida M."/>
            <person name="Hotuta T."/>
            <person name="Kusano J."/>
            <person name="Kanehori K."/>
            <person name="Takahashi-Fujii A."/>
            <person name="Hara H."/>
            <person name="Tanase T.-O."/>
            <person name="Nomura Y."/>
            <person name="Togiya S."/>
            <person name="Komai F."/>
            <person name="Hara R."/>
            <person name="Takeuchi K."/>
            <person name="Arita M."/>
            <person name="Imose N."/>
            <person name="Musashino K."/>
            <person name="Yuuki H."/>
            <person name="Oshima A."/>
            <person name="Sasaki N."/>
            <person name="Aotsuka S."/>
            <person name="Yoshikawa Y."/>
            <person name="Matsunawa H."/>
            <person name="Ichihara T."/>
            <person name="Shiohata N."/>
            <person name="Sano S."/>
            <person name="Moriya S."/>
            <person name="Momiyama H."/>
            <person name="Satoh N."/>
            <person name="Takami S."/>
            <person name="Terashima Y."/>
            <person name="Suzuki O."/>
            <person name="Nakagawa S."/>
            <person name="Senoh A."/>
            <person name="Mizoguchi H."/>
            <person name="Goto Y."/>
            <person name="Shimizu F."/>
            <person name="Wakebe H."/>
            <person name="Hishigaki H."/>
            <person name="Watanabe T."/>
            <person name="Sugiyama A."/>
            <person name="Takemoto M."/>
            <person name="Kawakami B."/>
            <person name="Yamazaki M."/>
            <person name="Watanabe K."/>
            <person name="Kumagai A."/>
            <person name="Itakura S."/>
            <person name="Fukuzumi Y."/>
            <person name="Fujimori Y."/>
            <person name="Komiyama M."/>
            <person name="Tashiro H."/>
            <person name="Tanigami A."/>
            <person name="Fujiwara T."/>
            <person name="Ono T."/>
            <person name="Yamada K."/>
            <person name="Fujii Y."/>
            <person name="Ozaki K."/>
            <person name="Hirao M."/>
            <person name="Ohmori Y."/>
            <person name="Kawabata A."/>
            <person name="Hikiji T."/>
            <person name="Kobatake N."/>
            <person name="Inagaki H."/>
            <person name="Ikema Y."/>
            <person name="Okamoto S."/>
            <person name="Okitani R."/>
            <person name="Kawakami T."/>
            <person name="Noguchi S."/>
            <person name="Itoh T."/>
            <person name="Shigeta K."/>
            <person name="Senba T."/>
            <person name="Matsumura K."/>
            <person name="Nakajima Y."/>
            <person name="Mizuno T."/>
            <person name="Morinaga M."/>
            <person name="Sasaki M."/>
            <person name="Togashi T."/>
            <person name="Oyama M."/>
            <person name="Hata H."/>
            <person name="Watanabe M."/>
            <person name="Komatsu T."/>
            <person name="Mizushima-Sugano J."/>
            <person name="Satoh T."/>
            <person name="Shirai Y."/>
            <person name="Takahashi Y."/>
            <person name="Nakagawa K."/>
            <person name="Okumura K."/>
            <person name="Nagase T."/>
            <person name="Nomura N."/>
            <person name="Kikuchi H."/>
            <person name="Masuho Y."/>
            <person name="Yamashita R."/>
            <person name="Nakai K."/>
            <person name="Yada T."/>
            <person name="Nakamura Y."/>
            <person name="Ohara O."/>
            <person name="Isogai T."/>
            <person name="Sugano S."/>
        </authorList>
    </citation>
    <scope>NUCLEOTIDE SEQUENCE [LARGE SCALE MRNA]</scope>
    <scope>VARIANTS THR-59 AND ARG-233</scope>
    <source>
        <tissue>Thymus</tissue>
    </source>
</reference>
<reference key="4">
    <citation type="submission" date="2003-12" db="EMBL/GenBank/DDBJ databases">
        <authorList>
            <consortium name="NIEHS SNPs program"/>
        </authorList>
    </citation>
    <scope>NUCLEOTIDE SEQUENCE [GENOMIC DNA]</scope>
    <scope>VARIANTS THR-59 AND ARG-233</scope>
</reference>
<reference key="5">
    <citation type="journal article" date="2006" name="Nature">
        <title>The finished DNA sequence of human chromosome 12.</title>
        <authorList>
            <person name="Scherer S.E."/>
            <person name="Muzny D.M."/>
            <person name="Buhay C.J."/>
            <person name="Chen R."/>
            <person name="Cree A."/>
            <person name="Ding Y."/>
            <person name="Dugan-Rocha S."/>
            <person name="Gill R."/>
            <person name="Gunaratne P."/>
            <person name="Harris R.A."/>
            <person name="Hawes A.C."/>
            <person name="Hernandez J."/>
            <person name="Hodgson A.V."/>
            <person name="Hume J."/>
            <person name="Jackson A."/>
            <person name="Khan Z.M."/>
            <person name="Kovar-Smith C."/>
            <person name="Lewis L.R."/>
            <person name="Lozado R.J."/>
            <person name="Metzker M.L."/>
            <person name="Milosavljevic A."/>
            <person name="Miner G.R."/>
            <person name="Montgomery K.T."/>
            <person name="Morgan M.B."/>
            <person name="Nazareth L.V."/>
            <person name="Scott G."/>
            <person name="Sodergren E."/>
            <person name="Song X.-Z."/>
            <person name="Steffen D."/>
            <person name="Lovering R.C."/>
            <person name="Wheeler D.A."/>
            <person name="Worley K.C."/>
            <person name="Yuan Y."/>
            <person name="Zhang Z."/>
            <person name="Adams C.Q."/>
            <person name="Ansari-Lari M.A."/>
            <person name="Ayele M."/>
            <person name="Brown M.J."/>
            <person name="Chen G."/>
            <person name="Chen Z."/>
            <person name="Clerc-Blankenburg K.P."/>
            <person name="Davis C."/>
            <person name="Delgado O."/>
            <person name="Dinh H.H."/>
            <person name="Draper H."/>
            <person name="Gonzalez-Garay M.L."/>
            <person name="Havlak P."/>
            <person name="Jackson L.R."/>
            <person name="Jacob L.S."/>
            <person name="Kelly S.H."/>
            <person name="Li L."/>
            <person name="Li Z."/>
            <person name="Liu J."/>
            <person name="Liu W."/>
            <person name="Lu J."/>
            <person name="Maheshwari M."/>
            <person name="Nguyen B.-V."/>
            <person name="Okwuonu G.O."/>
            <person name="Pasternak S."/>
            <person name="Perez L.M."/>
            <person name="Plopper F.J.H."/>
            <person name="Santibanez J."/>
            <person name="Shen H."/>
            <person name="Tabor P.E."/>
            <person name="Verduzco D."/>
            <person name="Waldron L."/>
            <person name="Wang Q."/>
            <person name="Williams G.A."/>
            <person name="Zhang J."/>
            <person name="Zhou J."/>
            <person name="Allen C.C."/>
            <person name="Amin A.G."/>
            <person name="Anyalebechi V."/>
            <person name="Bailey M."/>
            <person name="Barbaria J.A."/>
            <person name="Bimage K.E."/>
            <person name="Bryant N.P."/>
            <person name="Burch P.E."/>
            <person name="Burkett C.E."/>
            <person name="Burrell K.L."/>
            <person name="Calderon E."/>
            <person name="Cardenas V."/>
            <person name="Carter K."/>
            <person name="Casias K."/>
            <person name="Cavazos I."/>
            <person name="Cavazos S.R."/>
            <person name="Ceasar H."/>
            <person name="Chacko J."/>
            <person name="Chan S.N."/>
            <person name="Chavez D."/>
            <person name="Christopoulos C."/>
            <person name="Chu J."/>
            <person name="Cockrell R."/>
            <person name="Cox C.D."/>
            <person name="Dang M."/>
            <person name="Dathorne S.R."/>
            <person name="David R."/>
            <person name="Davis C.M."/>
            <person name="Davy-Carroll L."/>
            <person name="Deshazo D.R."/>
            <person name="Donlin J.E."/>
            <person name="D'Souza L."/>
            <person name="Eaves K.A."/>
            <person name="Egan A."/>
            <person name="Emery-Cohen A.J."/>
            <person name="Escotto M."/>
            <person name="Flagg N."/>
            <person name="Forbes L.D."/>
            <person name="Gabisi A.M."/>
            <person name="Garza M."/>
            <person name="Hamilton C."/>
            <person name="Henderson N."/>
            <person name="Hernandez O."/>
            <person name="Hines S."/>
            <person name="Hogues M.E."/>
            <person name="Huang M."/>
            <person name="Idlebird D.G."/>
            <person name="Johnson R."/>
            <person name="Jolivet A."/>
            <person name="Jones S."/>
            <person name="Kagan R."/>
            <person name="King L.M."/>
            <person name="Leal B."/>
            <person name="Lebow H."/>
            <person name="Lee S."/>
            <person name="LeVan J.M."/>
            <person name="Lewis L.C."/>
            <person name="London P."/>
            <person name="Lorensuhewa L.M."/>
            <person name="Loulseged H."/>
            <person name="Lovett D.A."/>
            <person name="Lucier A."/>
            <person name="Lucier R.L."/>
            <person name="Ma J."/>
            <person name="Madu R.C."/>
            <person name="Mapua P."/>
            <person name="Martindale A.D."/>
            <person name="Martinez E."/>
            <person name="Massey E."/>
            <person name="Mawhiney S."/>
            <person name="Meador M.G."/>
            <person name="Mendez S."/>
            <person name="Mercado C."/>
            <person name="Mercado I.C."/>
            <person name="Merritt C.E."/>
            <person name="Miner Z.L."/>
            <person name="Minja E."/>
            <person name="Mitchell T."/>
            <person name="Mohabbat F."/>
            <person name="Mohabbat K."/>
            <person name="Montgomery B."/>
            <person name="Moore N."/>
            <person name="Morris S."/>
            <person name="Munidasa M."/>
            <person name="Ngo R.N."/>
            <person name="Nguyen N.B."/>
            <person name="Nickerson E."/>
            <person name="Nwaokelemeh O.O."/>
            <person name="Nwokenkwo S."/>
            <person name="Obregon M."/>
            <person name="Oguh M."/>
            <person name="Oragunye N."/>
            <person name="Oviedo R.J."/>
            <person name="Parish B.J."/>
            <person name="Parker D.N."/>
            <person name="Parrish J."/>
            <person name="Parks K.L."/>
            <person name="Paul H.A."/>
            <person name="Payton B.A."/>
            <person name="Perez A."/>
            <person name="Perrin W."/>
            <person name="Pickens A."/>
            <person name="Primus E.L."/>
            <person name="Pu L.-L."/>
            <person name="Puazo M."/>
            <person name="Quiles M.M."/>
            <person name="Quiroz J.B."/>
            <person name="Rabata D."/>
            <person name="Reeves K."/>
            <person name="Ruiz S.J."/>
            <person name="Shao H."/>
            <person name="Sisson I."/>
            <person name="Sonaike T."/>
            <person name="Sorelle R.P."/>
            <person name="Sutton A.E."/>
            <person name="Svatek A.F."/>
            <person name="Svetz L.A."/>
            <person name="Tamerisa K.S."/>
            <person name="Taylor T.R."/>
            <person name="Teague B."/>
            <person name="Thomas N."/>
            <person name="Thorn R.D."/>
            <person name="Trejos Z.Y."/>
            <person name="Trevino B.K."/>
            <person name="Ukegbu O.N."/>
            <person name="Urban J.B."/>
            <person name="Vasquez L.I."/>
            <person name="Vera V.A."/>
            <person name="Villasana D.M."/>
            <person name="Wang L."/>
            <person name="Ward-Moore S."/>
            <person name="Warren J.T."/>
            <person name="Wei X."/>
            <person name="White F."/>
            <person name="Williamson A.L."/>
            <person name="Wleczyk R."/>
            <person name="Wooden H.S."/>
            <person name="Wooden S.H."/>
            <person name="Yen J."/>
            <person name="Yoon L."/>
            <person name="Yoon V."/>
            <person name="Zorrilla S.E."/>
            <person name="Nelson D."/>
            <person name="Kucherlapati R."/>
            <person name="Weinstock G."/>
            <person name="Gibbs R.A."/>
        </authorList>
    </citation>
    <scope>NUCLEOTIDE SEQUENCE [LARGE SCALE GENOMIC DNA]</scope>
</reference>
<reference key="6">
    <citation type="journal article" date="2004" name="Genome Res.">
        <title>The status, quality, and expansion of the NIH full-length cDNA project: the Mammalian Gene Collection (MGC).</title>
        <authorList>
            <consortium name="The MGC Project Team"/>
        </authorList>
    </citation>
    <scope>NUCLEOTIDE SEQUENCE [LARGE SCALE MRNA]</scope>
    <scope>VARIANT ARG-233</scope>
    <source>
        <tissue>B-cell</tissue>
    </source>
</reference>
<reference key="7">
    <citation type="journal article" date="2004" name="Protein Sci.">
        <title>Signal peptide prediction based on analysis of experimentally verified cleavage sites.</title>
        <authorList>
            <person name="Zhang Z."/>
            <person name="Henzel W.J."/>
        </authorList>
    </citation>
    <scope>PROTEIN SEQUENCE OF 20-34</scope>
</reference>
<reference key="8">
    <citation type="journal article" date="1998" name="Eur. J. Immunol.">
        <title>The TNF receptor family member CD27 signals to Jun N-terminal kinase via Traf-2.</title>
        <authorList>
            <person name="Gravestein L.A."/>
            <person name="Amsen D."/>
            <person name="Boes M."/>
            <person name="Calvo C.R."/>
            <person name="Kruisbeek A.M."/>
            <person name="Borst J."/>
        </authorList>
    </citation>
    <scope>INTERACTION WITH TRAF2</scope>
</reference>
<reference key="9">
    <citation type="journal article" date="1997" name="Proc. Natl. Acad. Sci. U.S.A.">
        <title>CD27, a member of the tumor necrosis factor receptor family, induces apoptosis and binds to Siva, a proapoptotic protein.</title>
        <authorList>
            <person name="Prasad K.V.S."/>
            <person name="Ao Z."/>
            <person name="Yoon Y."/>
            <person name="Wu M.X."/>
            <person name="Rizk M."/>
            <person name="Jacquot S."/>
            <person name="Schlossman S.F."/>
        </authorList>
    </citation>
    <scope>INTERACTION WITH SIVA1</scope>
    <source>
        <tissue>Cervix carcinoma</tissue>
        <tissue>Thymus</tissue>
    </source>
</reference>
<reference key="10">
    <citation type="journal article" date="2012" name="Mol. Cell. Proteomics">
        <title>Human urinary glycoproteomics; attachment site specific analysis of N- and O-linked glycosylations by CID and ECD.</title>
        <authorList>
            <person name="Halim A."/>
            <person name="Nilsson J."/>
            <person name="Ruetschi U."/>
            <person name="Hesse C."/>
            <person name="Larson G."/>
        </authorList>
    </citation>
    <scope>GLYCOSYLATION AT SER-127</scope>
    <scope>STRUCTURE OF CARBOHYDRATES</scope>
    <scope>IDENTIFICATION BY MASS SPECTROMETRY</scope>
</reference>
<reference key="11">
    <citation type="journal article" date="2017" name="J. Exp. Med.">
        <title>Inherited CD70 deficiency in humans reveals a critical role for the CD70-CD27 pathway in immunity to Epstein-Barr virus infection.</title>
        <authorList>
            <person name="Izawa K."/>
            <person name="Martin E."/>
            <person name="Soudais C."/>
            <person name="Bruneau J."/>
            <person name="Boutboul D."/>
            <person name="Rodriguez R."/>
            <person name="Lenoir C."/>
            <person name="Hislop A.D."/>
            <person name="Besson C."/>
            <person name="Touzot F."/>
            <person name="Picard C."/>
            <person name="Callebaut I."/>
            <person name="de Villartay J.P."/>
            <person name="Moshous D."/>
            <person name="Fischer A."/>
            <person name="Latour S."/>
        </authorList>
    </citation>
    <scope>FUNCTION</scope>
    <scope>SUBCELLULAR LOCATION</scope>
</reference>
<reference key="12">
    <citation type="journal article" date="2024" name="Immunity">
        <title>Signaling via a CD27-TRAF2-SHP-1 axis during naive T cell activation promotes memory-associated gene regulatory networks.</title>
        <authorList>
            <person name="Jaeger-Ruckstuhl C.A."/>
            <person name="Lo Y."/>
            <person name="Fulton E."/>
            <person name="Waltner O.G."/>
            <person name="Shabaneh T.B."/>
            <person name="Simon S."/>
            <person name="Muthuraman P.V."/>
            <person name="Correnti C.E."/>
            <person name="Newsom O.J."/>
            <person name="Engstrom I.A."/>
            <person name="Kanaan S.B."/>
            <person name="Bhise S.S."/>
            <person name="Peralta J.M.C."/>
            <person name="Ruff R."/>
            <person name="Price J.P."/>
            <person name="Stull S.M."/>
            <person name="Stevens A.R."/>
            <person name="Bugos G."/>
            <person name="Kluesner M.G."/>
            <person name="Voillet V."/>
            <person name="Muhunthan V."/>
            <person name="Morrish F."/>
            <person name="Olson J.M."/>
            <person name="Gottardo R."/>
            <person name="Sarthy J.F."/>
            <person name="Henikoff S."/>
            <person name="Sullivan L.B."/>
            <person name="Furlan S.N."/>
            <person name="Riddell S.R."/>
        </authorList>
    </citation>
    <scope>FUNCTION</scope>
    <scope>INTERACTION WITH TRAF2 AND PTPN6</scope>
</reference>
<reference key="13">
    <citation type="journal article" date="2012" name="J. Allergy Clin. Immunol.">
        <title>CD27 deficiency is associated with combined immunodeficiency and persistent symptomatic EBV viremia.</title>
        <authorList>
            <person name="van Montfrans J.M."/>
            <person name="Hoepelman A.I."/>
            <person name="Otto S."/>
            <person name="van Gijn M."/>
            <person name="van de Corput L."/>
            <person name="de Weger R.A."/>
            <person name="Monaco-Shawver L."/>
            <person name="Banerjee P.P."/>
            <person name="Sanders E.A."/>
            <person name="Jol-van der Zijde C.M."/>
            <person name="Betts M.R."/>
            <person name="Orange J.S."/>
            <person name="Bloem A.C."/>
            <person name="Tesselaar K."/>
        </authorList>
    </citation>
    <scope>INVOLVEMENT IN LPFS2</scope>
</reference>
<reference evidence="22" key="14">
    <citation type="journal article" date="2021" name="J. Biol. Chem.">
        <title>Structural delineation and phase-dependent activation of the costimulatory CD27:CD70 complex.</title>
        <authorList>
            <person name="Liu W."/>
            <person name="Maben Z."/>
            <person name="Wang C."/>
            <person name="Lindquist K.C."/>
            <person name="Li M."/>
            <person name="Rayannavar V."/>
            <person name="Lopez Armenta I."/>
            <person name="Nager A."/>
            <person name="Pascua E."/>
            <person name="Dominik P.K."/>
            <person name="Oyen D."/>
            <person name="Wang H."/>
            <person name="Roach R.C."/>
            <person name="Allan C.M."/>
            <person name="Mosyak L."/>
            <person name="Chaparro-Riggers J."/>
        </authorList>
    </citation>
    <scope>X-RAY CRYSTALLOGRAPHY (2.69 ANGSTROMS) OF 23-127 IN COMPLEX WITH CD70</scope>
    <scope>SUBUNIT</scope>
    <scope>GLYCOSYLATION AT ASN-95</scope>
    <scope>DISULFIDE BONDS</scope>
    <scope>MUTAGENESIS OF ARG-30; ASP-74; GLU-82; SER-83; ASN-88; ASN-95; ARG-113; ASP-114; THR-118 AND ASP-121</scope>
</reference>
<reference key="15">
    <citation type="journal article" date="2013" name="Haematologica">
        <title>Combined immunodeficiency with life-threatening EBV-associated lymphoproliferative disorder in patients lacking functional CD27.</title>
        <authorList>
            <person name="Salzer E."/>
            <person name="Daschkey S."/>
            <person name="Choo S."/>
            <person name="Gombert M."/>
            <person name="Santos-Valente E."/>
            <person name="Ginzel S."/>
            <person name="Schwendinger M."/>
            <person name="Haas O.A."/>
            <person name="Fritsch G."/>
            <person name="Pickl W.F."/>
            <person name="Foerster-Waldl E."/>
            <person name="Borkhardt A."/>
            <person name="Boztug K."/>
            <person name="Bienemann K."/>
            <person name="Seidel M.G."/>
        </authorList>
    </citation>
    <scope>VARIANT LPFS2 TYR-53</scope>
</reference>
<proteinExistence type="evidence at protein level"/>